<accession>Q108U7</accession>
<protein>
    <recommendedName>
        <fullName>Caveolin-1</fullName>
    </recommendedName>
</protein>
<dbReference type="EMBL" id="DP000087">
    <property type="protein sequence ID" value="ABG66645.1"/>
    <property type="molecule type" value="Genomic_DNA"/>
</dbReference>
<dbReference type="RefSeq" id="XP_003407276.1">
    <property type="nucleotide sequence ID" value="XM_003407228.3"/>
</dbReference>
<dbReference type="FunCoup" id="Q108U7">
    <property type="interactions" value="204"/>
</dbReference>
<dbReference type="STRING" id="9785.ENSLAFP00000020339"/>
<dbReference type="Ensembl" id="ENSLAFT00000032388.1">
    <property type="protein sequence ID" value="ENSLAFP00000027945.1"/>
    <property type="gene ID" value="ENSLAFG00000028864.1"/>
</dbReference>
<dbReference type="GeneID" id="100655995"/>
<dbReference type="KEGG" id="lav:100655995"/>
<dbReference type="CTD" id="857"/>
<dbReference type="eggNOG" id="ENOG502QUK5">
    <property type="taxonomic scope" value="Eukaryota"/>
</dbReference>
<dbReference type="GeneTree" id="ENSGT00950000183006"/>
<dbReference type="HOGENOM" id="CLU_102582_0_0_1"/>
<dbReference type="InParanoid" id="Q108U7"/>
<dbReference type="OrthoDB" id="5917823at2759"/>
<dbReference type="Proteomes" id="UP000007646">
    <property type="component" value="Unassembled WGS sequence"/>
</dbReference>
<dbReference type="GO" id="GO:0005901">
    <property type="term" value="C:caveola"/>
    <property type="evidence" value="ECO:0000250"/>
    <property type="project" value="UniProtKB"/>
</dbReference>
<dbReference type="GO" id="GO:0005768">
    <property type="term" value="C:endosome"/>
    <property type="evidence" value="ECO:0000250"/>
    <property type="project" value="UniProtKB"/>
</dbReference>
<dbReference type="GO" id="GO:0005925">
    <property type="term" value="C:focal adhesion"/>
    <property type="evidence" value="ECO:0007669"/>
    <property type="project" value="TreeGrafter"/>
</dbReference>
<dbReference type="GO" id="GO:0000139">
    <property type="term" value="C:Golgi membrane"/>
    <property type="evidence" value="ECO:0007669"/>
    <property type="project" value="UniProtKB-SubCell"/>
</dbReference>
<dbReference type="GO" id="GO:0045121">
    <property type="term" value="C:membrane raft"/>
    <property type="evidence" value="ECO:0000250"/>
    <property type="project" value="UniProtKB"/>
</dbReference>
<dbReference type="GO" id="GO:0048471">
    <property type="term" value="C:perinuclear region of cytoplasm"/>
    <property type="evidence" value="ECO:0007669"/>
    <property type="project" value="TreeGrafter"/>
</dbReference>
<dbReference type="GO" id="GO:0042383">
    <property type="term" value="C:sarcolemma"/>
    <property type="evidence" value="ECO:0007669"/>
    <property type="project" value="TreeGrafter"/>
</dbReference>
<dbReference type="GO" id="GO:0060090">
    <property type="term" value="F:molecular adaptor activity"/>
    <property type="evidence" value="ECO:0007669"/>
    <property type="project" value="TreeGrafter"/>
</dbReference>
<dbReference type="GO" id="GO:0008142">
    <property type="term" value="F:oxysterol binding"/>
    <property type="evidence" value="ECO:0000250"/>
    <property type="project" value="UniProtKB"/>
</dbReference>
<dbReference type="GO" id="GO:0019901">
    <property type="term" value="F:protein kinase binding"/>
    <property type="evidence" value="ECO:0007669"/>
    <property type="project" value="TreeGrafter"/>
</dbReference>
<dbReference type="GO" id="GO:0044325">
    <property type="term" value="F:transmembrane transporter binding"/>
    <property type="evidence" value="ECO:0007669"/>
    <property type="project" value="TreeGrafter"/>
</dbReference>
<dbReference type="GO" id="GO:0070836">
    <property type="term" value="P:caveola assembly"/>
    <property type="evidence" value="ECO:0007669"/>
    <property type="project" value="InterPro"/>
</dbReference>
<dbReference type="GO" id="GO:0030154">
    <property type="term" value="P:cell differentiation"/>
    <property type="evidence" value="ECO:0007669"/>
    <property type="project" value="TreeGrafter"/>
</dbReference>
<dbReference type="GO" id="GO:0001937">
    <property type="term" value="P:negative regulation of endothelial cell proliferation"/>
    <property type="evidence" value="ECO:0007669"/>
    <property type="project" value="TreeGrafter"/>
</dbReference>
<dbReference type="GO" id="GO:0031623">
    <property type="term" value="P:receptor internalization"/>
    <property type="evidence" value="ECO:0000250"/>
    <property type="project" value="UniProtKB"/>
</dbReference>
<dbReference type="GO" id="GO:0051480">
    <property type="term" value="P:regulation of cytosolic calcium ion concentration"/>
    <property type="evidence" value="ECO:0007669"/>
    <property type="project" value="TreeGrafter"/>
</dbReference>
<dbReference type="GO" id="GO:0031295">
    <property type="term" value="P:T cell costimulation"/>
    <property type="evidence" value="ECO:0000250"/>
    <property type="project" value="UniProtKB"/>
</dbReference>
<dbReference type="InterPro" id="IPR001612">
    <property type="entry name" value="Caveolin"/>
</dbReference>
<dbReference type="InterPro" id="IPR018361">
    <property type="entry name" value="Caveolin_CS"/>
</dbReference>
<dbReference type="PANTHER" id="PTHR10844">
    <property type="entry name" value="CAVEOLIN"/>
    <property type="match status" value="1"/>
</dbReference>
<dbReference type="PANTHER" id="PTHR10844:SF18">
    <property type="entry name" value="CAVEOLIN-1"/>
    <property type="match status" value="1"/>
</dbReference>
<dbReference type="Pfam" id="PF01146">
    <property type="entry name" value="Caveolin"/>
    <property type="match status" value="1"/>
</dbReference>
<dbReference type="PROSITE" id="PS01210">
    <property type="entry name" value="CAVEOLIN"/>
    <property type="match status" value="1"/>
</dbReference>
<evidence type="ECO:0000250" key="1"/>
<evidence type="ECO:0000250" key="2">
    <source>
        <dbReference type="UniProtKB" id="P41350"/>
    </source>
</evidence>
<evidence type="ECO:0000250" key="3">
    <source>
        <dbReference type="UniProtKB" id="P49817"/>
    </source>
</evidence>
<evidence type="ECO:0000250" key="4">
    <source>
        <dbReference type="UniProtKB" id="Q03135"/>
    </source>
</evidence>
<evidence type="ECO:0000250" key="5">
    <source>
        <dbReference type="UniProtKB" id="Q2IBA5"/>
    </source>
</evidence>
<evidence type="ECO:0000255" key="6"/>
<evidence type="ECO:0000305" key="7"/>
<keyword id="KW-0007">Acetylation</keyword>
<keyword id="KW-1003">Cell membrane</keyword>
<keyword id="KW-0333">Golgi apparatus</keyword>
<keyword id="KW-1017">Isopeptide bond</keyword>
<keyword id="KW-0449">Lipoprotein</keyword>
<keyword id="KW-0472">Membrane</keyword>
<keyword id="KW-0564">Palmitate</keyword>
<keyword id="KW-0597">Phosphoprotein</keyword>
<keyword id="KW-1185">Reference proteome</keyword>
<keyword id="KW-0832">Ubl conjugation</keyword>
<proteinExistence type="inferred from homology"/>
<reference key="1">
    <citation type="submission" date="2006-07" db="EMBL/GenBank/DDBJ databases">
        <title>NISC comparative sequencing initiative.</title>
        <authorList>
            <person name="Antonellis A."/>
            <person name="Ayele K."/>
            <person name="Benjamin B."/>
            <person name="Blakesley R.W."/>
            <person name="Boakye A."/>
            <person name="Bouffard G.G."/>
            <person name="Brinkley C."/>
            <person name="Brooks S."/>
            <person name="Chu G."/>
            <person name="Coleman H."/>
            <person name="Engle J."/>
            <person name="Gestole M."/>
            <person name="Greene A."/>
            <person name="Guan X."/>
            <person name="Gupta J."/>
            <person name="Haghighi P."/>
            <person name="Han J."/>
            <person name="Hansen N."/>
            <person name="Ho S.-L."/>
            <person name="Hu P."/>
            <person name="Hunter G."/>
            <person name="Hurle B."/>
            <person name="Idol J.R."/>
            <person name="Kwong P."/>
            <person name="Laric P."/>
            <person name="Larson S."/>
            <person name="Lee-Lin S.-Q."/>
            <person name="Legaspi R."/>
            <person name="Madden M."/>
            <person name="Maduro Q.L."/>
            <person name="Maduro V.B."/>
            <person name="Margulies E.H."/>
            <person name="Masiello C."/>
            <person name="Maskeri B."/>
            <person name="McDowell J."/>
            <person name="Mojidi H.A."/>
            <person name="Mullikin J.C."/>
            <person name="Oestreicher J.S."/>
            <person name="Park M."/>
            <person name="Portnoy M.E."/>
            <person name="Prasad A."/>
            <person name="Puri O."/>
            <person name="Reddix-Dugue N."/>
            <person name="Schandler K."/>
            <person name="Schueler M.G."/>
            <person name="Sison C."/>
            <person name="Stantripop S."/>
            <person name="Stephen E."/>
            <person name="Taye A."/>
            <person name="Thomas J.W."/>
            <person name="Thomas P.J."/>
            <person name="Tsipouri V."/>
            <person name="Ung L."/>
            <person name="Vogt J.L."/>
            <person name="Wetherby K.D."/>
            <person name="Young A."/>
            <person name="Green E.D."/>
        </authorList>
    </citation>
    <scope>NUCLEOTIDE SEQUENCE [LARGE SCALE GENOMIC DNA]</scope>
</reference>
<organism>
    <name type="scientific">Loxodonta africana</name>
    <name type="common">African elephant</name>
    <dbReference type="NCBI Taxonomy" id="9785"/>
    <lineage>
        <taxon>Eukaryota</taxon>
        <taxon>Metazoa</taxon>
        <taxon>Chordata</taxon>
        <taxon>Craniata</taxon>
        <taxon>Vertebrata</taxon>
        <taxon>Euteleostomi</taxon>
        <taxon>Mammalia</taxon>
        <taxon>Eutheria</taxon>
        <taxon>Afrotheria</taxon>
        <taxon>Proboscidea</taxon>
        <taxon>Elephantidae</taxon>
        <taxon>Loxodonta</taxon>
    </lineage>
</organism>
<gene>
    <name type="primary">CAV1</name>
</gene>
<sequence>MSGGKYVDSEGHLYTAPIREQGNIYKPNNRDMAEEMHEKQVYDAHTKEIDLVNRDPKHLNDDVVKIDFEDVIAEPEGTHSFDGIWKASFTTFTVTKYWFYRLLSALFGIPMALIWGIYFAILSFLHIWAVVPCIKSFLIEIQCISRVYSIYVHTFCDPLFEAIGKIFSSIRINMQKEI</sequence>
<comment type="function">
    <text evidence="3 4">May act as a scaffolding protein within caveolar membranes. Forms a stable heterooligomeric complex with CAV2 that targets to lipid rafts and drives caveolae formation. Mediates the recruitment of CAVIN proteins (CAVIN1/2/3/4) to the caveolae (By similarity). Interacts directly with G-protein alpha subunits and can functionally regulate their activity (By similarity). Involved in the costimulatory signal essential for T-cell receptor (TCR)-mediated T-cell activation. Its binding to DPP4 induces T-cell proliferation and NF-kappa-B activation in a T-cell receptor/CD3-dependent manner (By similarity). Recruits CTNNB1 to caveolar membranes and may regulate CTNNB1-mediated signaling through the Wnt pathway (By similarity). Negatively regulates TGFB1-mediated activation of SMAD2/3 by mediating the internalization of TGFBR1 from membrane rafts leading to its subsequent degradation (By similarity). Binds 20(S)-hydroxycholesterol (20(S)-OHC) (By similarity).</text>
</comment>
<comment type="subunit">
    <text evidence="2 3 4 5">Homooligomer. Interacts with GLIPR2. Interacts with NOSTRIN (By similarity). Interacts with SNAP25 and STX1A (By similarity). Interacts (via the N-terminus) with DPP4; the interaction is direct (By similarity). Interacts with CTNNB1, CDH1 and JUP. Interacts with PACSIN2; this interaction induces membrane tubulation (By similarity). Interacts with SLC7A9 (By similarity). Interacts with BMX and BTK. Interacts with TGFBR1. Interacts with CAVIN3 (via leucine-zipper domain) in a cholesterol-sensitive manner. Interacts with CAVIN1. Interacts with EHD2 in a cholesterol-dependent manner. Forms a ternary complex with UBXN6 and VCP; mediates CAV1 targeting to lysosomes for degradation. Interacts with ABCG1; this interaction regulates ABCG1-mediated cholesterol efflux (By similarity). Interacts with NEU3; this interaction enhances NEU3 sialidase activity within caveola. Interacts (via C-terminus) with SPRY1, SPRY2 (via C-terminus), SPRY3, and SPRY4 (By similarity). Interacts with IGFBP5; this interaction allows trafficking of IGFBP5 from the plasma membrane to the nucleus (By similarity).</text>
</comment>
<comment type="subcellular location">
    <subcellularLocation>
        <location evidence="1">Golgi apparatus membrane</location>
        <topology evidence="1">Peripheral membrane protein</topology>
    </subcellularLocation>
    <subcellularLocation>
        <location evidence="1">Cell membrane</location>
        <topology evidence="1">Peripheral membrane protein</topology>
    </subcellularLocation>
    <subcellularLocation>
        <location evidence="3">Membrane</location>
        <location evidence="3">Caveola</location>
        <topology evidence="1">Peripheral membrane protein</topology>
    </subcellularLocation>
    <subcellularLocation>
        <location evidence="4">Membrane raft</location>
    </subcellularLocation>
    <text evidence="1">Colocalized with DPP4 in membrane rafts. Potential hairpin-like structure in the membrane. Membrane protein of caveolae (By similarity).</text>
</comment>
<comment type="PTM">
    <text evidence="4">Phosphorylated at Tyr-14 by ABL1 in response to oxidative stress.</text>
</comment>
<comment type="PTM">
    <text evidence="4">Ubiquitinated. Undergo monoubiquitination and multi- and/or polyubiquitination. Monoubiquitination of N-terminal lysines promotes integration in a ternary complex with UBXN6 and VCP which promotes oligomeric CAV1 targeting to lysosomes for degradation. Ubiquitinated by ZNRF1; leading to degradation and modulation of the TLR4-mediated immune response.</text>
</comment>
<comment type="similarity">
    <text evidence="7">Belongs to the caveolin family.</text>
</comment>
<name>CAV1_LOXAF</name>
<feature type="initiator methionine" description="Removed" evidence="4">
    <location>
        <position position="1"/>
    </location>
</feature>
<feature type="chain" id="PRO_0000250458" description="Caveolin-1">
    <location>
        <begin position="2"/>
        <end position="178"/>
    </location>
</feature>
<feature type="topological domain" description="Cytoplasmic" evidence="6">
    <location>
        <begin position="2"/>
        <end position="104"/>
    </location>
</feature>
<feature type="intramembrane region" description="Helical" evidence="6">
    <location>
        <begin position="105"/>
        <end position="125"/>
    </location>
</feature>
<feature type="topological domain" description="Cytoplasmic" evidence="6">
    <location>
        <begin position="126"/>
        <end position="178"/>
    </location>
</feature>
<feature type="region of interest" description="Required for homooligomerization" evidence="4">
    <location>
        <begin position="2"/>
        <end position="94"/>
    </location>
</feature>
<feature type="region of interest" description="Interaction with CAVIN3" evidence="4">
    <location>
        <begin position="82"/>
        <end position="94"/>
    </location>
</feature>
<feature type="region of interest" description="Interacts with SPRY1, SPRY2, SPRY3 and SPRY4" evidence="3">
    <location>
        <begin position="131"/>
        <end position="142"/>
    </location>
</feature>
<feature type="region of interest" description="Interacts with SPRY1, SPRY2, and SPRY4" evidence="3">
    <location>
        <begin position="149"/>
        <end position="160"/>
    </location>
</feature>
<feature type="region of interest" description="Interacts with SPRY1, SPRY2, SPRY3 and SPRY4" evidence="3">
    <location>
        <begin position="167"/>
        <end position="178"/>
    </location>
</feature>
<feature type="modified residue" description="N-acetylserine" evidence="4">
    <location>
        <position position="2"/>
    </location>
</feature>
<feature type="modified residue" description="Phosphoserine" evidence="2">
    <location>
        <position position="2"/>
    </location>
</feature>
<feature type="modified residue" description="N6-acetyllysine; alternate" evidence="4">
    <location>
        <position position="5"/>
    </location>
</feature>
<feature type="modified residue" description="Phosphotyrosine" evidence="4">
    <location>
        <position position="6"/>
    </location>
</feature>
<feature type="modified residue" description="Phosphoserine" evidence="3">
    <location>
        <position position="9"/>
    </location>
</feature>
<feature type="modified residue" description="Phosphotyrosine; by ABL1" evidence="3">
    <location>
        <position position="14"/>
    </location>
</feature>
<feature type="modified residue" description="Phosphotyrosine" evidence="4">
    <location>
        <position position="25"/>
    </location>
</feature>
<feature type="lipid moiety-binding region" description="S-palmitoyl cysteine" evidence="1">
    <location>
        <position position="133"/>
    </location>
</feature>
<feature type="lipid moiety-binding region" description="S-palmitoyl cysteine" evidence="1">
    <location>
        <position position="143"/>
    </location>
</feature>
<feature type="lipid moiety-binding region" description="S-palmitoyl cysteine" evidence="1">
    <location>
        <position position="156"/>
    </location>
</feature>
<feature type="cross-link" description="Glycyl lysine isopeptide (Lys-Gly) (interchain with G-Cter in ubiquitin); alternate" evidence="4">
    <location>
        <position position="5"/>
    </location>
</feature>
<feature type="cross-link" description="Glycyl lysine isopeptide (Lys-Gly) (interchain with G-Cter in ubiquitin)" evidence="4">
    <location>
        <position position="26"/>
    </location>
</feature>
<feature type="cross-link" description="Glycyl lysine isopeptide (Lys-Gly) (interchain with G-Cter in ubiquitin)" evidence="4">
    <location>
        <position position="39"/>
    </location>
</feature>
<feature type="cross-link" description="Glycyl lysine isopeptide (Lys-Gly) (interchain with G-Cter in ubiquitin)" evidence="4">
    <location>
        <position position="47"/>
    </location>
</feature>
<feature type="cross-link" description="Glycyl lysine isopeptide (Lys-Gly) (interchain with G-Cter in ubiquitin)" evidence="4">
    <location>
        <position position="57"/>
    </location>
</feature>